<organism>
    <name type="scientific">Psychrobacter arcticus (strain DSM 17307 / VKM B-2377 / 273-4)</name>
    <dbReference type="NCBI Taxonomy" id="259536"/>
    <lineage>
        <taxon>Bacteria</taxon>
        <taxon>Pseudomonadati</taxon>
        <taxon>Pseudomonadota</taxon>
        <taxon>Gammaproteobacteria</taxon>
        <taxon>Moraxellales</taxon>
        <taxon>Moraxellaceae</taxon>
        <taxon>Psychrobacter</taxon>
    </lineage>
</organism>
<reference key="1">
    <citation type="journal article" date="2010" name="Appl. Environ. Microbiol.">
        <title>The genome sequence of Psychrobacter arcticus 273-4, a psychroactive Siberian permafrost bacterium, reveals mechanisms for adaptation to low-temperature growth.</title>
        <authorList>
            <person name="Ayala-del-Rio H.L."/>
            <person name="Chain P.S."/>
            <person name="Grzymski J.J."/>
            <person name="Ponder M.A."/>
            <person name="Ivanova N."/>
            <person name="Bergholz P.W."/>
            <person name="Di Bartolo G."/>
            <person name="Hauser L."/>
            <person name="Land M."/>
            <person name="Bakermans C."/>
            <person name="Rodrigues D."/>
            <person name="Klappenbach J."/>
            <person name="Zarka D."/>
            <person name="Larimer F."/>
            <person name="Richardson P."/>
            <person name="Murray A."/>
            <person name="Thomashow M."/>
            <person name="Tiedje J.M."/>
        </authorList>
    </citation>
    <scope>NUCLEOTIDE SEQUENCE [LARGE SCALE GENOMIC DNA]</scope>
    <source>
        <strain>DSM 17307 / VKM B-2377 / 273-4</strain>
    </source>
</reference>
<dbReference type="EMBL" id="CP000082">
    <property type="protein sequence ID" value="AAZ18144.1"/>
    <property type="molecule type" value="Genomic_DNA"/>
</dbReference>
<dbReference type="RefSeq" id="WP_011279582.1">
    <property type="nucleotide sequence ID" value="NC_007204.1"/>
</dbReference>
<dbReference type="STRING" id="259536.Psyc_0274"/>
<dbReference type="KEGG" id="par:Psyc_0274"/>
<dbReference type="eggNOG" id="COG1671">
    <property type="taxonomic scope" value="Bacteria"/>
</dbReference>
<dbReference type="HOGENOM" id="CLU_106619_2_1_6"/>
<dbReference type="OrthoDB" id="9798918at2"/>
<dbReference type="Proteomes" id="UP000000546">
    <property type="component" value="Chromosome"/>
</dbReference>
<dbReference type="CDD" id="cd18720">
    <property type="entry name" value="PIN_YqxD-like"/>
    <property type="match status" value="1"/>
</dbReference>
<dbReference type="HAMAP" id="MF_00489">
    <property type="entry name" value="UPF0178"/>
    <property type="match status" value="1"/>
</dbReference>
<dbReference type="InterPro" id="IPR003791">
    <property type="entry name" value="UPF0178"/>
</dbReference>
<dbReference type="NCBIfam" id="NF001095">
    <property type="entry name" value="PRK00124.1"/>
    <property type="match status" value="1"/>
</dbReference>
<dbReference type="PANTHER" id="PTHR35146">
    <property type="entry name" value="UPF0178 PROTEIN YAII"/>
    <property type="match status" value="1"/>
</dbReference>
<dbReference type="PANTHER" id="PTHR35146:SF1">
    <property type="entry name" value="UPF0178 PROTEIN YAII"/>
    <property type="match status" value="1"/>
</dbReference>
<dbReference type="Pfam" id="PF02639">
    <property type="entry name" value="DUF188"/>
    <property type="match status" value="1"/>
</dbReference>
<comment type="similarity">
    <text evidence="1">Belongs to the UPF0178 family.</text>
</comment>
<keyword id="KW-1185">Reference proteome</keyword>
<name>Y274_PSYA2</name>
<sequence>MQIWVDADSVPLIAKDLIIKTAERTQTMAIFVANQPIKLRKSPLLVMTVVPSGFDKADDYIVEQIQPGDLAITSDIPLANDILDKGGMVLTTRGVVYDKNNIKQKLNMRDFMDTMRGTGVLELQEMSGQKPYGDRDKKAFADGLNKLVR</sequence>
<gene>
    <name type="ordered locus">Psyc_0274</name>
</gene>
<feature type="chain" id="PRO_0000241821" description="UPF0178 protein Psyc_0274">
    <location>
        <begin position="1"/>
        <end position="149"/>
    </location>
</feature>
<proteinExistence type="inferred from homology"/>
<evidence type="ECO:0000255" key="1">
    <source>
        <dbReference type="HAMAP-Rule" id="MF_00489"/>
    </source>
</evidence>
<protein>
    <recommendedName>
        <fullName evidence="1">UPF0178 protein Psyc_0274</fullName>
    </recommendedName>
</protein>
<accession>Q4FV14</accession>